<sequence length="1032" mass="114725">MGPAKKPAMAGVNSKAEREADLVMGTNNSSIVSKRSVEMLYYSKPHFFRYFVKKPQRRSPLINRGYWLRMHAMAETVRKFMREPSDKPKFVLNLGCGFDPLPYMLLSADNDLCRDTTFVDIDYEKLMVNKKTAIRKTDEITQLLEDVEFLPDDSAVQIRSKPYLAIGCDLKNLTKLDTVLRAEVLPSECAVLFLAEVSLTYMDVKSANAVVSWASGLSNDAQFCILEQFFPDGPDHPFASTMMKHFKKLGAPLYSIHEYPSLNEQEQRFKDAGWNHAHARSLWDLWSDDEFVDGSLRASLDAIEPFDEWEEFALFGSHYFLLHASTRPRVSETATRTLTGLDPQTDKSGHFRLLAKCPPGSGQRRFGAVIPDSDKAVGHHSGLGRQTRLSSTELYTKSEGTTKTHEFPPGDIPARMCHTVTCLSNQDCLLVGGRASPASGFKDCWVRQGNQWRSTQSLPVPRFRHSAVKVTLDSEYVLVYGGKTSDGTTLNTWLAWSSKKQDWQQVETNSIHIKARFGACLGSINDTSGVLFGGIGAEGTILGDFFTWKLHQRSDGSLFMELTDHTDDLRRTSSLFNQIHRFGATVNQTAWGLVIVGGIVPRGIITHDKEIMLLDSTELTKCIASGWPSNHTIISALGLGNRLDGPRPLLVGHVSCAIDSKEILILGGGAVCFSFGTYWTEGTWLLQDVSSTTENDWTLIPESVEPNKSQSEKATSKPSAQSQNEPYRAAEVITPIPRVCVQNPAQFQDILAEGRPVIIEGSDVGPCTELWTKEYLTSAVGGDRKIVVHEAQSAHMSFQTKNFSYATKTFGTFMDEVYAGDRQYLRSISAEQPTKLPANLAVDFPSLSHDFRLPESLSIVTDNTHSSPLRISGPVTLWLHYDVMANVLCQIRGEKRLILFPPSDVQYLQVPPGASSSTINIFQSNGSVASIPHTSPQEAVLKRGDILFIPPLWLHTASPTGDVSVAVNVFFRNLSKGYAAGRDVYGNRDLQAYEKARNDIQKMAKSFDGLPSEMARFYLLRLAQELKDKAEK</sequence>
<organism>
    <name type="scientific">Aspergillus oryzae (strain ATCC 42149 / RIB 40)</name>
    <name type="common">Yellow koji mold</name>
    <dbReference type="NCBI Taxonomy" id="510516"/>
    <lineage>
        <taxon>Eukaryota</taxon>
        <taxon>Fungi</taxon>
        <taxon>Dikarya</taxon>
        <taxon>Ascomycota</taxon>
        <taxon>Pezizomycotina</taxon>
        <taxon>Eurotiomycetes</taxon>
        <taxon>Eurotiomycetidae</taxon>
        <taxon>Eurotiales</taxon>
        <taxon>Aspergillaceae</taxon>
        <taxon>Aspergillus</taxon>
        <taxon>Aspergillus subgen. Circumdati</taxon>
    </lineage>
</organism>
<keyword id="KW-0489">Methyltransferase</keyword>
<keyword id="KW-1185">Reference proteome</keyword>
<keyword id="KW-0949">S-adenosyl-L-methionine</keyword>
<keyword id="KW-0808">Transferase</keyword>
<keyword id="KW-0819">tRNA processing</keyword>
<protein>
    <recommendedName>
        <fullName>tRNA wybutosine-synthesizing protein 4</fullName>
        <shortName>tRNA-yW synthesizing protein 4</shortName>
        <ecNumber>2.1.1.290</ecNumber>
        <ecNumber>2.3.1.231</ecNumber>
    </recommendedName>
    <alternativeName>
        <fullName>Leucine carboxyl methyltransferase 2</fullName>
    </alternativeName>
    <alternativeName>
        <fullName>tRNA(Phe) (7-(3-amino-3-(methoxycarbonyl)propyl)wyosine(37)-N)-methoxycarbonyltransferase</fullName>
    </alternativeName>
    <alternativeName>
        <fullName>tRNA(Phe) (7-(3-amino-3-carboxypropyl)wyosine(37)-O)-methyltransferase</fullName>
    </alternativeName>
</protein>
<evidence type="ECO:0000250" key="1"/>
<evidence type="ECO:0000255" key="2">
    <source>
        <dbReference type="PROSITE-ProRule" id="PRU00538"/>
    </source>
</evidence>
<evidence type="ECO:0000256" key="3">
    <source>
        <dbReference type="SAM" id="MobiDB-lite"/>
    </source>
</evidence>
<evidence type="ECO:0000305" key="4"/>
<comment type="function">
    <text evidence="1">Probable S-adenosyl-L-methionine-dependent methyltransferase that acts as a component of the wybutosine biosynthesis pathway. Wybutosine is a hyper modified guanosine with a tricyclic base found at the 3'-position adjacent to the anticodon of eukaryotic phenylalanine tRNA. May methylate the carboxyl group of leucine residues to form alpha-leucine ester residues (By similarity).</text>
</comment>
<comment type="catalytic activity">
    <reaction>
        <text>7-[(3S)-3-amino-3-carboxypropyl]wyosine(37) in tRNA(Phe) + S-adenosyl-L-methionine = 7-[(3S)-(3-amino-3-methoxycarbonyl)propyl]wyosine(37) in tRNA(Phe) + S-adenosyl-L-homocysteine</text>
        <dbReference type="Rhea" id="RHEA:36903"/>
        <dbReference type="Rhea" id="RHEA-COMP:10379"/>
        <dbReference type="Rhea" id="RHEA-COMP:11844"/>
        <dbReference type="ChEBI" id="CHEBI:57856"/>
        <dbReference type="ChEBI" id="CHEBI:59789"/>
        <dbReference type="ChEBI" id="CHEBI:73543"/>
        <dbReference type="ChEBI" id="CHEBI:74275"/>
        <dbReference type="EC" id="2.1.1.290"/>
    </reaction>
</comment>
<comment type="catalytic activity">
    <reaction>
        <text>7-[(3S)-(3-amino-3-methoxycarbonyl)propyl]wyosine(37) in tRNA(Phe) + S-adenosyl-L-methionine + CO2 = wybutosine(37) in tRNA(Phe) + S-adenosyl-L-homocysteine + 2 H(+)</text>
        <dbReference type="Rhea" id="RHEA:37119"/>
        <dbReference type="Rhea" id="RHEA-COMP:11844"/>
        <dbReference type="Rhea" id="RHEA-COMP:11847"/>
        <dbReference type="ChEBI" id="CHEBI:15378"/>
        <dbReference type="ChEBI" id="CHEBI:16526"/>
        <dbReference type="ChEBI" id="CHEBI:57856"/>
        <dbReference type="ChEBI" id="CHEBI:59789"/>
        <dbReference type="ChEBI" id="CHEBI:73544"/>
        <dbReference type="ChEBI" id="CHEBI:74275"/>
        <dbReference type="EC" id="2.3.1.231"/>
    </reaction>
</comment>
<comment type="pathway">
    <text>tRNA modification; wybutosine-tRNA(Phe) biosynthesis.</text>
</comment>
<comment type="similarity">
    <text evidence="4">Belongs to the methyltransferase superfamily. LCMT family.</text>
</comment>
<comment type="sequence caution" evidence="4">
    <conflict type="erroneous gene model prediction">
        <sequence resource="EMBL-CDS" id="BAE62881"/>
    </conflict>
</comment>
<reference key="1">
    <citation type="journal article" date="2005" name="Nature">
        <title>Genome sequencing and analysis of Aspergillus oryzae.</title>
        <authorList>
            <person name="Machida M."/>
            <person name="Asai K."/>
            <person name="Sano M."/>
            <person name="Tanaka T."/>
            <person name="Kumagai T."/>
            <person name="Terai G."/>
            <person name="Kusumoto K."/>
            <person name="Arima T."/>
            <person name="Akita O."/>
            <person name="Kashiwagi Y."/>
            <person name="Abe K."/>
            <person name="Gomi K."/>
            <person name="Horiuchi H."/>
            <person name="Kitamoto K."/>
            <person name="Kobayashi T."/>
            <person name="Takeuchi M."/>
            <person name="Denning D.W."/>
            <person name="Galagan J.E."/>
            <person name="Nierman W.C."/>
            <person name="Yu J."/>
            <person name="Archer D.B."/>
            <person name="Bennett J.W."/>
            <person name="Bhatnagar D."/>
            <person name="Cleveland T.E."/>
            <person name="Fedorova N.D."/>
            <person name="Gotoh O."/>
            <person name="Horikawa H."/>
            <person name="Hosoyama A."/>
            <person name="Ichinomiya M."/>
            <person name="Igarashi R."/>
            <person name="Iwashita K."/>
            <person name="Juvvadi P.R."/>
            <person name="Kato M."/>
            <person name="Kato Y."/>
            <person name="Kin T."/>
            <person name="Kokubun A."/>
            <person name="Maeda H."/>
            <person name="Maeyama N."/>
            <person name="Maruyama J."/>
            <person name="Nagasaki H."/>
            <person name="Nakajima T."/>
            <person name="Oda K."/>
            <person name="Okada K."/>
            <person name="Paulsen I."/>
            <person name="Sakamoto K."/>
            <person name="Sawano T."/>
            <person name="Takahashi M."/>
            <person name="Takase K."/>
            <person name="Terabayashi Y."/>
            <person name="Wortman J.R."/>
            <person name="Yamada O."/>
            <person name="Yamagata Y."/>
            <person name="Anazawa H."/>
            <person name="Hata Y."/>
            <person name="Koide Y."/>
            <person name="Komori T."/>
            <person name="Koyama Y."/>
            <person name="Minetoki T."/>
            <person name="Suharnan S."/>
            <person name="Tanaka A."/>
            <person name="Isono K."/>
            <person name="Kuhara S."/>
            <person name="Ogasawara N."/>
            <person name="Kikuchi H."/>
        </authorList>
    </citation>
    <scope>NUCLEOTIDE SEQUENCE [LARGE SCALE GENOMIC DNA]</scope>
    <source>
        <strain>ATCC 42149 / RIB 40</strain>
    </source>
</reference>
<dbReference type="EC" id="2.1.1.290"/>
<dbReference type="EC" id="2.3.1.231"/>
<dbReference type="EMBL" id="BA000053">
    <property type="protein sequence ID" value="BAE62881.1"/>
    <property type="status" value="ALT_SEQ"/>
    <property type="molecule type" value="Genomic_DNA"/>
</dbReference>
<dbReference type="SMR" id="Q2U6D4"/>
<dbReference type="STRING" id="510516.Q2U6D4"/>
<dbReference type="EnsemblFungi" id="BAE62881">
    <property type="protein sequence ID" value="BAE62881"/>
    <property type="gene ID" value="AO090120000285"/>
</dbReference>
<dbReference type="UniPathway" id="UPA00375"/>
<dbReference type="Proteomes" id="UP000006564">
    <property type="component" value="Chromosome 5"/>
</dbReference>
<dbReference type="GO" id="GO:0008175">
    <property type="term" value="F:tRNA methyltransferase activity"/>
    <property type="evidence" value="ECO:0007669"/>
    <property type="project" value="TreeGrafter"/>
</dbReference>
<dbReference type="GO" id="GO:0030488">
    <property type="term" value="P:tRNA methylation"/>
    <property type="evidence" value="ECO:0007669"/>
    <property type="project" value="TreeGrafter"/>
</dbReference>
<dbReference type="GO" id="GO:0031591">
    <property type="term" value="P:wybutosine biosynthetic process"/>
    <property type="evidence" value="ECO:0007669"/>
    <property type="project" value="TreeGrafter"/>
</dbReference>
<dbReference type="FunFam" id="2.120.10.80:FF:000133">
    <property type="entry name" value="Leucine carboxyl methyltransferase 2"/>
    <property type="match status" value="1"/>
</dbReference>
<dbReference type="FunFam" id="3.40.50.150:FF:000383">
    <property type="entry name" value="Leucine carboxyl methyltransferase 2"/>
    <property type="match status" value="1"/>
</dbReference>
<dbReference type="FunFam" id="2.60.120.650:FF:000043">
    <property type="entry name" value="tRNA wybutosine-synthesizing protein 4"/>
    <property type="match status" value="1"/>
</dbReference>
<dbReference type="Gene3D" id="6.10.140.1470">
    <property type="match status" value="1"/>
</dbReference>
<dbReference type="Gene3D" id="2.60.120.650">
    <property type="entry name" value="Cupin"/>
    <property type="match status" value="1"/>
</dbReference>
<dbReference type="Gene3D" id="2.120.10.80">
    <property type="entry name" value="Kelch-type beta propeller"/>
    <property type="match status" value="1"/>
</dbReference>
<dbReference type="Gene3D" id="3.40.50.150">
    <property type="entry name" value="Vaccinia Virus protein VP39"/>
    <property type="match status" value="1"/>
</dbReference>
<dbReference type="InterPro" id="IPR041667">
    <property type="entry name" value="Cupin_8"/>
</dbReference>
<dbReference type="InterPro" id="IPR003347">
    <property type="entry name" value="JmjC_dom"/>
</dbReference>
<dbReference type="InterPro" id="IPR015915">
    <property type="entry name" value="Kelch-typ_b-propeller"/>
</dbReference>
<dbReference type="InterPro" id="IPR007213">
    <property type="entry name" value="Ppm1/Ppm2/Tcmp"/>
</dbReference>
<dbReference type="InterPro" id="IPR029063">
    <property type="entry name" value="SAM-dependent_MTases_sf"/>
</dbReference>
<dbReference type="PANTHER" id="PTHR46529">
    <property type="entry name" value="TRNA WYBUTOSINE-SYNTHESIZING PROTEIN 4"/>
    <property type="match status" value="1"/>
</dbReference>
<dbReference type="PANTHER" id="PTHR46529:SF1">
    <property type="entry name" value="TRNA WYBUTOSINE-SYNTHESIZING PROTEIN 4"/>
    <property type="match status" value="1"/>
</dbReference>
<dbReference type="Pfam" id="PF13621">
    <property type="entry name" value="Cupin_8"/>
    <property type="match status" value="1"/>
</dbReference>
<dbReference type="Pfam" id="PF13418">
    <property type="entry name" value="Kelch_4"/>
    <property type="match status" value="1"/>
</dbReference>
<dbReference type="Pfam" id="PF04072">
    <property type="entry name" value="LCM"/>
    <property type="match status" value="1"/>
</dbReference>
<dbReference type="SUPFAM" id="SSF51197">
    <property type="entry name" value="Clavaminate synthase-like"/>
    <property type="match status" value="1"/>
</dbReference>
<dbReference type="SUPFAM" id="SSF117281">
    <property type="entry name" value="Kelch motif"/>
    <property type="match status" value="1"/>
</dbReference>
<dbReference type="SUPFAM" id="SSF53335">
    <property type="entry name" value="S-adenosyl-L-methionine-dependent methyltransferases"/>
    <property type="match status" value="1"/>
</dbReference>
<dbReference type="PROSITE" id="PS51184">
    <property type="entry name" value="JMJC"/>
    <property type="match status" value="1"/>
</dbReference>
<proteinExistence type="inferred from homology"/>
<feature type="chain" id="PRO_0000226138" description="tRNA wybutosine-synthesizing protein 4">
    <location>
        <begin position="1"/>
        <end position="1032"/>
    </location>
</feature>
<feature type="domain" description="JmjC" evidence="2">
    <location>
        <begin position="833"/>
        <end position="988"/>
    </location>
</feature>
<feature type="region of interest" description="Disordered" evidence="3">
    <location>
        <begin position="702"/>
        <end position="726"/>
    </location>
</feature>
<feature type="compositionally biased region" description="Polar residues" evidence="3">
    <location>
        <begin position="716"/>
        <end position="725"/>
    </location>
</feature>
<feature type="binding site" evidence="1">
    <location>
        <position position="69"/>
    </location>
    <ligand>
        <name>S-adenosyl-L-methionine</name>
        <dbReference type="ChEBI" id="CHEBI:59789"/>
    </ligand>
</feature>
<feature type="binding site" evidence="1">
    <location>
        <position position="95"/>
    </location>
    <ligand>
        <name>S-adenosyl-L-methionine</name>
        <dbReference type="ChEBI" id="CHEBI:59789"/>
    </ligand>
</feature>
<feature type="binding site" evidence="1">
    <location>
        <position position="122"/>
    </location>
    <ligand>
        <name>S-adenosyl-L-methionine</name>
        <dbReference type="ChEBI" id="CHEBI:59789"/>
    </ligand>
</feature>
<feature type="binding site" evidence="1">
    <location>
        <begin position="169"/>
        <end position="170"/>
    </location>
    <ligand>
        <name>S-adenosyl-L-methionine</name>
        <dbReference type="ChEBI" id="CHEBI:59789"/>
    </ligand>
</feature>
<feature type="binding site" evidence="1">
    <location>
        <position position="196"/>
    </location>
    <ligand>
        <name>S-adenosyl-L-methionine</name>
        <dbReference type="ChEBI" id="CHEBI:59789"/>
    </ligand>
</feature>
<accession>Q2U6D4</accession>
<gene>
    <name type="primary">ppm2</name>
    <name type="synonym">tyw4</name>
    <name type="ORF">AO090120000285</name>
</gene>
<name>TYW4_ASPOR</name>